<sequence>MTVSFEKTSDTKGTLSFSIDQETIKTGLDKAFNKVKANISVPGFRKGKISRQMFNKMYGEEALFEEALNAVLPTAYDAAVKEAAIEPVAQPKIDVAKMEKGSDWELTAEVVVKPTITLGDYKDLTVEVDATKEVTDEEVETRLTNAQNNLAELAVKETAAENGDTVVIDFVGSVDGVEFEGGKGSNHSLELGSGQFIPGFEEQLIGTKAGETVEVKVTFPENYQAEDLAGKEALFVTTVNEVKAKELPELDDELAKDIDEEVETLEELKAKFRKELEESKSEAYDDAVETAAIEAAVANAEIKEIPEEMIHEEVHRAMNEFLGGMQQQGISPEMYFQITGTSEDDLHKQYEADADKRVRTNLVIEAIAAAESFTTSDEEVKAEIEDLAGQYNMPVEQVEKLLPVDMLKHDIAMKKAVEVIATTAKVK</sequence>
<accession>A2RIM8</accession>
<organism>
    <name type="scientific">Lactococcus lactis subsp. cremoris (strain MG1363)</name>
    <dbReference type="NCBI Taxonomy" id="416870"/>
    <lineage>
        <taxon>Bacteria</taxon>
        <taxon>Bacillati</taxon>
        <taxon>Bacillota</taxon>
        <taxon>Bacilli</taxon>
        <taxon>Lactobacillales</taxon>
        <taxon>Streptococcaceae</taxon>
        <taxon>Lactococcus</taxon>
        <taxon>Lactococcus cremoris subsp. cremoris</taxon>
    </lineage>
</organism>
<dbReference type="EC" id="5.2.1.8" evidence="1"/>
<dbReference type="EMBL" id="AM406671">
    <property type="protein sequence ID" value="CAL97123.1"/>
    <property type="molecule type" value="Genomic_DNA"/>
</dbReference>
<dbReference type="RefSeq" id="WP_011834555.1">
    <property type="nucleotide sequence ID" value="NC_009004.1"/>
</dbReference>
<dbReference type="SMR" id="A2RIM8"/>
<dbReference type="STRING" id="416870.llmg_0519"/>
<dbReference type="KEGG" id="llm:llmg_0519"/>
<dbReference type="eggNOG" id="COG0544">
    <property type="taxonomic scope" value="Bacteria"/>
</dbReference>
<dbReference type="HOGENOM" id="CLU_033058_3_2_9"/>
<dbReference type="OrthoDB" id="9767721at2"/>
<dbReference type="PhylomeDB" id="A2RIM8"/>
<dbReference type="Proteomes" id="UP000000364">
    <property type="component" value="Chromosome"/>
</dbReference>
<dbReference type="GO" id="GO:0005737">
    <property type="term" value="C:cytoplasm"/>
    <property type="evidence" value="ECO:0007669"/>
    <property type="project" value="UniProtKB-SubCell"/>
</dbReference>
<dbReference type="GO" id="GO:0003755">
    <property type="term" value="F:peptidyl-prolyl cis-trans isomerase activity"/>
    <property type="evidence" value="ECO:0007669"/>
    <property type="project" value="UniProtKB-UniRule"/>
</dbReference>
<dbReference type="GO" id="GO:0044183">
    <property type="term" value="F:protein folding chaperone"/>
    <property type="evidence" value="ECO:0007669"/>
    <property type="project" value="TreeGrafter"/>
</dbReference>
<dbReference type="GO" id="GO:0043022">
    <property type="term" value="F:ribosome binding"/>
    <property type="evidence" value="ECO:0007669"/>
    <property type="project" value="TreeGrafter"/>
</dbReference>
<dbReference type="GO" id="GO:0051083">
    <property type="term" value="P:'de novo' cotranslational protein folding"/>
    <property type="evidence" value="ECO:0007669"/>
    <property type="project" value="TreeGrafter"/>
</dbReference>
<dbReference type="GO" id="GO:0051301">
    <property type="term" value="P:cell division"/>
    <property type="evidence" value="ECO:0007669"/>
    <property type="project" value="UniProtKB-KW"/>
</dbReference>
<dbReference type="GO" id="GO:0061077">
    <property type="term" value="P:chaperone-mediated protein folding"/>
    <property type="evidence" value="ECO:0007669"/>
    <property type="project" value="TreeGrafter"/>
</dbReference>
<dbReference type="GO" id="GO:0015031">
    <property type="term" value="P:protein transport"/>
    <property type="evidence" value="ECO:0007669"/>
    <property type="project" value="UniProtKB-UniRule"/>
</dbReference>
<dbReference type="GO" id="GO:0043335">
    <property type="term" value="P:protein unfolding"/>
    <property type="evidence" value="ECO:0007669"/>
    <property type="project" value="TreeGrafter"/>
</dbReference>
<dbReference type="FunFam" id="3.10.50.40:FF:000001">
    <property type="entry name" value="Trigger factor"/>
    <property type="match status" value="1"/>
</dbReference>
<dbReference type="Gene3D" id="3.10.50.40">
    <property type="match status" value="1"/>
</dbReference>
<dbReference type="Gene3D" id="3.30.70.1050">
    <property type="entry name" value="Trigger factor ribosome-binding domain"/>
    <property type="match status" value="1"/>
</dbReference>
<dbReference type="Gene3D" id="1.10.3120.10">
    <property type="entry name" value="Trigger factor, C-terminal domain"/>
    <property type="match status" value="1"/>
</dbReference>
<dbReference type="HAMAP" id="MF_00303">
    <property type="entry name" value="Trigger_factor_Tig"/>
    <property type="match status" value="1"/>
</dbReference>
<dbReference type="InterPro" id="IPR046357">
    <property type="entry name" value="PPIase_dom_sf"/>
</dbReference>
<dbReference type="InterPro" id="IPR001179">
    <property type="entry name" value="PPIase_FKBP_dom"/>
</dbReference>
<dbReference type="InterPro" id="IPR005215">
    <property type="entry name" value="Trig_fac"/>
</dbReference>
<dbReference type="InterPro" id="IPR008880">
    <property type="entry name" value="Trigger_fac_C"/>
</dbReference>
<dbReference type="InterPro" id="IPR037041">
    <property type="entry name" value="Trigger_fac_C_sf"/>
</dbReference>
<dbReference type="InterPro" id="IPR008881">
    <property type="entry name" value="Trigger_fac_ribosome-bd_bac"/>
</dbReference>
<dbReference type="InterPro" id="IPR036611">
    <property type="entry name" value="Trigger_fac_ribosome-bd_sf"/>
</dbReference>
<dbReference type="InterPro" id="IPR027304">
    <property type="entry name" value="Trigger_fact/SurA_dom_sf"/>
</dbReference>
<dbReference type="NCBIfam" id="TIGR00115">
    <property type="entry name" value="tig"/>
    <property type="match status" value="1"/>
</dbReference>
<dbReference type="PANTHER" id="PTHR30560">
    <property type="entry name" value="TRIGGER FACTOR CHAPERONE AND PEPTIDYL-PROLYL CIS/TRANS ISOMERASE"/>
    <property type="match status" value="1"/>
</dbReference>
<dbReference type="PANTHER" id="PTHR30560:SF3">
    <property type="entry name" value="TRIGGER FACTOR-LIKE PROTEIN TIG, CHLOROPLASTIC"/>
    <property type="match status" value="1"/>
</dbReference>
<dbReference type="Pfam" id="PF00254">
    <property type="entry name" value="FKBP_C"/>
    <property type="match status" value="1"/>
</dbReference>
<dbReference type="Pfam" id="PF05698">
    <property type="entry name" value="Trigger_C"/>
    <property type="match status" value="1"/>
</dbReference>
<dbReference type="Pfam" id="PF05697">
    <property type="entry name" value="Trigger_N"/>
    <property type="match status" value="1"/>
</dbReference>
<dbReference type="PIRSF" id="PIRSF003095">
    <property type="entry name" value="Trigger_factor"/>
    <property type="match status" value="1"/>
</dbReference>
<dbReference type="SUPFAM" id="SSF54534">
    <property type="entry name" value="FKBP-like"/>
    <property type="match status" value="1"/>
</dbReference>
<dbReference type="SUPFAM" id="SSF109998">
    <property type="entry name" value="Triger factor/SurA peptide-binding domain-like"/>
    <property type="match status" value="1"/>
</dbReference>
<dbReference type="SUPFAM" id="SSF102735">
    <property type="entry name" value="Trigger factor ribosome-binding domain"/>
    <property type="match status" value="1"/>
</dbReference>
<dbReference type="PROSITE" id="PS50059">
    <property type="entry name" value="FKBP_PPIASE"/>
    <property type="match status" value="1"/>
</dbReference>
<feature type="chain" id="PRO_1000022698" description="Trigger factor">
    <location>
        <begin position="1"/>
        <end position="427"/>
    </location>
</feature>
<feature type="domain" description="PPIase FKBP-type" evidence="1">
    <location>
        <begin position="163"/>
        <end position="248"/>
    </location>
</feature>
<protein>
    <recommendedName>
        <fullName evidence="1">Trigger factor</fullName>
        <shortName evidence="1">TF</shortName>
        <ecNumber evidence="1">5.2.1.8</ecNumber>
    </recommendedName>
    <alternativeName>
        <fullName evidence="1">PPIase</fullName>
    </alternativeName>
</protein>
<reference key="1">
    <citation type="journal article" date="2007" name="J. Bacteriol.">
        <title>The complete genome sequence of the lactic acid bacterial paradigm Lactococcus lactis subsp. cremoris MG1363.</title>
        <authorList>
            <person name="Wegmann U."/>
            <person name="O'Connell-Motherway M."/>
            <person name="Zomer A."/>
            <person name="Buist G."/>
            <person name="Shearman C."/>
            <person name="Canchaya C."/>
            <person name="Ventura M."/>
            <person name="Goesmann A."/>
            <person name="Gasson M.J."/>
            <person name="Kuipers O.P."/>
            <person name="van Sinderen D."/>
            <person name="Kok J."/>
        </authorList>
    </citation>
    <scope>NUCLEOTIDE SEQUENCE [LARGE SCALE GENOMIC DNA]</scope>
    <source>
        <strain>MG1363</strain>
    </source>
</reference>
<evidence type="ECO:0000255" key="1">
    <source>
        <dbReference type="HAMAP-Rule" id="MF_00303"/>
    </source>
</evidence>
<gene>
    <name evidence="1" type="primary">tig</name>
    <name type="ordered locus">llmg_0519</name>
</gene>
<comment type="function">
    <text evidence="1">Involved in protein export. Acts as a chaperone by maintaining the newly synthesized protein in an open conformation. Functions as a peptidyl-prolyl cis-trans isomerase.</text>
</comment>
<comment type="catalytic activity">
    <reaction evidence="1">
        <text>[protein]-peptidylproline (omega=180) = [protein]-peptidylproline (omega=0)</text>
        <dbReference type="Rhea" id="RHEA:16237"/>
        <dbReference type="Rhea" id="RHEA-COMP:10747"/>
        <dbReference type="Rhea" id="RHEA-COMP:10748"/>
        <dbReference type="ChEBI" id="CHEBI:83833"/>
        <dbReference type="ChEBI" id="CHEBI:83834"/>
        <dbReference type="EC" id="5.2.1.8"/>
    </reaction>
</comment>
<comment type="subcellular location">
    <subcellularLocation>
        <location>Cytoplasm</location>
    </subcellularLocation>
    <text evidence="1">About half TF is bound to the ribosome near the polypeptide exit tunnel while the other half is free in the cytoplasm.</text>
</comment>
<comment type="domain">
    <text evidence="1">Consists of 3 domains; the N-terminus binds the ribosome, the middle domain has PPIase activity, while the C-terminus has intrinsic chaperone activity on its own.</text>
</comment>
<comment type="similarity">
    <text evidence="1">Belongs to the FKBP-type PPIase family. Tig subfamily.</text>
</comment>
<keyword id="KW-0131">Cell cycle</keyword>
<keyword id="KW-0132">Cell division</keyword>
<keyword id="KW-0143">Chaperone</keyword>
<keyword id="KW-0963">Cytoplasm</keyword>
<keyword id="KW-0413">Isomerase</keyword>
<keyword id="KW-0697">Rotamase</keyword>
<name>TIG_LACLM</name>
<proteinExistence type="inferred from homology"/>